<name>FGF3_DANRE</name>
<gene>
    <name type="primary">fgf3</name>
    <name type="synonym">fgf-3</name>
</gene>
<comment type="function">
    <text evidence="1">Plays an important role in the regulation of embryonic development, cell proliferation, and cell differentiation.</text>
</comment>
<comment type="subcellular location">
    <subcellularLocation>
        <location evidence="5">Secreted</location>
    </subcellularLocation>
</comment>
<comment type="similarity">
    <text evidence="4">Belongs to the heparin-binding growth factors family.</text>
</comment>
<sequence length="256" mass="28923">MVIILLLLLLSFLDPSLEESLAPRLTRTPRAPCARGQACDPRQRRDAGGRGGVYEHLGGAPRRRKLYCATKYHLQIHPNGKIDGSLEENNPLSILEITAVDVGVVAIKGLFSGRYLAMNEKGRLYASEVFNRECEFLERIHELGYNTYASRHHATTQPPPTGSGIGGSKRRASSKRQWYVSINGKGRPRRGFKTRSTDKASLFLPRVLANKDHEMVRKLRESQRHHTGSHRAPVGRAERRRRRHRGSKGHNRRADI</sequence>
<feature type="signal peptide" evidence="2">
    <location>
        <begin position="1"/>
        <end position="18"/>
    </location>
</feature>
<feature type="chain" id="PRO_0000008950" description="Fibroblast growth factor 3">
    <location>
        <begin position="19"/>
        <end position="256"/>
    </location>
</feature>
<feature type="region of interest" description="Disordered" evidence="3">
    <location>
        <begin position="31"/>
        <end position="54"/>
    </location>
</feature>
<feature type="region of interest" description="Disordered" evidence="3">
    <location>
        <begin position="151"/>
        <end position="176"/>
    </location>
</feature>
<feature type="region of interest" description="Disordered" evidence="3">
    <location>
        <begin position="219"/>
        <end position="256"/>
    </location>
</feature>
<feature type="compositionally biased region" description="Basic residues" evidence="3">
    <location>
        <begin position="238"/>
        <end position="256"/>
    </location>
</feature>
<accession>P48802</accession>
<dbReference type="EMBL" id="Z48714">
    <property type="protein sequence ID" value="CAA88596.1"/>
    <property type="molecule type" value="Genomic_DNA"/>
</dbReference>
<dbReference type="PIR" id="JC4627">
    <property type="entry name" value="JC4627"/>
</dbReference>
<dbReference type="RefSeq" id="NP_571366.1">
    <property type="nucleotide sequence ID" value="NM_131291.1"/>
</dbReference>
<dbReference type="SMR" id="P48802"/>
<dbReference type="BioGRID" id="78723">
    <property type="interactions" value="2"/>
</dbReference>
<dbReference type="FunCoup" id="P48802">
    <property type="interactions" value="1842"/>
</dbReference>
<dbReference type="STRING" id="7955.ENSDARP00000132485"/>
<dbReference type="PaxDb" id="7955-ENSDARP00000099184"/>
<dbReference type="Ensembl" id="ENSDART00000168474">
    <property type="protein sequence ID" value="ENSDARP00000132485"/>
    <property type="gene ID" value="ENSDARG00000101540"/>
</dbReference>
<dbReference type="GeneID" id="30549"/>
<dbReference type="KEGG" id="dre:30549"/>
<dbReference type="AGR" id="ZFIN:ZDB-GENE-980526-178"/>
<dbReference type="CTD" id="2248"/>
<dbReference type="ZFIN" id="ZDB-GENE-980526-178">
    <property type="gene designation" value="fgf3"/>
</dbReference>
<dbReference type="eggNOG" id="KOG3885">
    <property type="taxonomic scope" value="Eukaryota"/>
</dbReference>
<dbReference type="HOGENOM" id="CLU_081609_1_0_1"/>
<dbReference type="InParanoid" id="P48802"/>
<dbReference type="OMA" id="YHLQIHA"/>
<dbReference type="OrthoDB" id="6158176at2759"/>
<dbReference type="PhylomeDB" id="P48802"/>
<dbReference type="TreeFam" id="TF317805"/>
<dbReference type="Reactome" id="R-DRE-1257604">
    <property type="pathway name" value="PIP3 activates AKT signaling"/>
</dbReference>
<dbReference type="Reactome" id="R-DRE-190370">
    <property type="pathway name" value="FGFR1b ligand binding and activation"/>
</dbReference>
<dbReference type="Reactome" id="R-DRE-190377">
    <property type="pathway name" value="FGFR2b ligand binding and activation"/>
</dbReference>
<dbReference type="Reactome" id="R-DRE-5654219">
    <property type="pathway name" value="Phospholipase C-mediated cascade: FGFR1"/>
</dbReference>
<dbReference type="Reactome" id="R-DRE-5654221">
    <property type="pathway name" value="Phospholipase C-mediated cascade, FGFR2"/>
</dbReference>
<dbReference type="Reactome" id="R-DRE-5654687">
    <property type="pathway name" value="Downstream signaling of activated FGFR1"/>
</dbReference>
<dbReference type="Reactome" id="R-DRE-5654688">
    <property type="pathway name" value="SHC-mediated cascade:FGFR1"/>
</dbReference>
<dbReference type="Reactome" id="R-DRE-5654689">
    <property type="pathway name" value="PI-3K cascade:FGFR1"/>
</dbReference>
<dbReference type="Reactome" id="R-DRE-5654693">
    <property type="pathway name" value="FRS-mediated FGFR1 signaling"/>
</dbReference>
<dbReference type="Reactome" id="R-DRE-5654699">
    <property type="pathway name" value="SHC-mediated cascade:FGFR2"/>
</dbReference>
<dbReference type="Reactome" id="R-DRE-5654700">
    <property type="pathway name" value="FRS-mediated FGFR2 signaling"/>
</dbReference>
<dbReference type="Reactome" id="R-DRE-5654726">
    <property type="pathway name" value="Negative regulation of FGFR1 signaling"/>
</dbReference>
<dbReference type="Reactome" id="R-DRE-5658623">
    <property type="pathway name" value="FGFRL1 modulation of FGFR1 signaling"/>
</dbReference>
<dbReference type="Reactome" id="R-DRE-5673001">
    <property type="pathway name" value="RAF/MAP kinase cascade"/>
</dbReference>
<dbReference type="Reactome" id="R-DRE-6811558">
    <property type="pathway name" value="PI5P, PP2A and IER3 Regulate PI3K/AKT Signaling"/>
</dbReference>
<dbReference type="PRO" id="PR:P48802"/>
<dbReference type="Proteomes" id="UP000000437">
    <property type="component" value="Chromosome 7"/>
</dbReference>
<dbReference type="Bgee" id="ENSDARG00000101540">
    <property type="expression patterns" value="Expressed in digestive tract epithelium and 68 other cell types or tissues"/>
</dbReference>
<dbReference type="ExpressionAtlas" id="P48802">
    <property type="expression patterns" value="baseline"/>
</dbReference>
<dbReference type="GO" id="GO:0005737">
    <property type="term" value="C:cytoplasm"/>
    <property type="evidence" value="ECO:0000318"/>
    <property type="project" value="GO_Central"/>
</dbReference>
<dbReference type="GO" id="GO:0031012">
    <property type="term" value="C:extracellular matrix"/>
    <property type="evidence" value="ECO:0000314"/>
    <property type="project" value="ZFIN"/>
</dbReference>
<dbReference type="GO" id="GO:0005615">
    <property type="term" value="C:extracellular space"/>
    <property type="evidence" value="ECO:0000314"/>
    <property type="project" value="ZFIN"/>
</dbReference>
<dbReference type="GO" id="GO:0005104">
    <property type="term" value="F:fibroblast growth factor receptor binding"/>
    <property type="evidence" value="ECO:0000314"/>
    <property type="project" value="ZFIN"/>
</dbReference>
<dbReference type="GO" id="GO:0008083">
    <property type="term" value="F:growth factor activity"/>
    <property type="evidence" value="ECO:0000318"/>
    <property type="project" value="GO_Central"/>
</dbReference>
<dbReference type="GO" id="GO:0021984">
    <property type="term" value="P:adenohypophysis development"/>
    <property type="evidence" value="ECO:0000315"/>
    <property type="project" value="ZFIN"/>
</dbReference>
<dbReference type="GO" id="GO:0009952">
    <property type="term" value="P:anterior/posterior pattern specification"/>
    <property type="evidence" value="ECO:0000316"/>
    <property type="project" value="ZFIN"/>
</dbReference>
<dbReference type="GO" id="GO:0051216">
    <property type="term" value="P:cartilage development"/>
    <property type="evidence" value="ECO:0000315"/>
    <property type="project" value="ZFIN"/>
</dbReference>
<dbReference type="GO" id="GO:0001708">
    <property type="term" value="P:cell fate specification"/>
    <property type="evidence" value="ECO:0000315"/>
    <property type="project" value="ZFIN"/>
</dbReference>
<dbReference type="GO" id="GO:0008283">
    <property type="term" value="P:cell population proliferation"/>
    <property type="evidence" value="ECO:0000315"/>
    <property type="project" value="ZFIN"/>
</dbReference>
<dbReference type="GO" id="GO:0009953">
    <property type="term" value="P:dorsal/ventral pattern formation"/>
    <property type="evidence" value="ECO:0000315"/>
    <property type="project" value="ZFIN"/>
</dbReference>
<dbReference type="GO" id="GO:0071696">
    <property type="term" value="P:ectodermal placode development"/>
    <property type="evidence" value="ECO:0000316"/>
    <property type="project" value="ZFIN"/>
</dbReference>
<dbReference type="GO" id="GO:0048702">
    <property type="term" value="P:embryonic neurocranium morphogenesis"/>
    <property type="evidence" value="ECO:0000316"/>
    <property type="project" value="ZFIN"/>
</dbReference>
<dbReference type="GO" id="GO:0009880">
    <property type="term" value="P:embryonic pattern specification"/>
    <property type="evidence" value="ECO:0000316"/>
    <property type="project" value="ZFIN"/>
</dbReference>
<dbReference type="GO" id="GO:0060059">
    <property type="term" value="P:embryonic retina morphogenesis in camera-type eye"/>
    <property type="evidence" value="ECO:0000316"/>
    <property type="project" value="ZFIN"/>
</dbReference>
<dbReference type="GO" id="GO:0008543">
    <property type="term" value="P:fibroblast growth factor receptor signaling pathway"/>
    <property type="evidence" value="ECO:0000318"/>
    <property type="project" value="GO_Central"/>
</dbReference>
<dbReference type="GO" id="GO:0030902">
    <property type="term" value="P:hindbrain development"/>
    <property type="evidence" value="ECO:0000315"/>
    <property type="project" value="ZFIN"/>
</dbReference>
<dbReference type="GO" id="GO:0021854">
    <property type="term" value="P:hypothalamus development"/>
    <property type="evidence" value="ECO:0000315"/>
    <property type="project" value="ZFIN"/>
</dbReference>
<dbReference type="GO" id="GO:0042472">
    <property type="term" value="P:inner ear morphogenesis"/>
    <property type="evidence" value="ECO:0000315"/>
    <property type="project" value="ZFIN"/>
</dbReference>
<dbReference type="GO" id="GO:0021703">
    <property type="term" value="P:locus ceruleus development"/>
    <property type="evidence" value="ECO:0000316"/>
    <property type="project" value="ZFIN"/>
</dbReference>
<dbReference type="GO" id="GO:0030901">
    <property type="term" value="P:midbrain development"/>
    <property type="evidence" value="ECO:0000316"/>
    <property type="project" value="ZFIN"/>
</dbReference>
<dbReference type="GO" id="GO:0043066">
    <property type="term" value="P:negative regulation of apoptotic process"/>
    <property type="evidence" value="ECO:0000315"/>
    <property type="project" value="ZFIN"/>
</dbReference>
<dbReference type="GO" id="GO:0014032">
    <property type="term" value="P:neural crest cell development"/>
    <property type="evidence" value="ECO:0000315"/>
    <property type="project" value="ZFIN"/>
</dbReference>
<dbReference type="GO" id="GO:0022008">
    <property type="term" value="P:neurogenesis"/>
    <property type="evidence" value="ECO:0000318"/>
    <property type="project" value="GO_Central"/>
</dbReference>
<dbReference type="GO" id="GO:0021985">
    <property type="term" value="P:neurohypophysis development"/>
    <property type="evidence" value="ECO:0000315"/>
    <property type="project" value="ZFIN"/>
</dbReference>
<dbReference type="GO" id="GO:0048666">
    <property type="term" value="P:neuron development"/>
    <property type="evidence" value="ECO:0000316"/>
    <property type="project" value="ZFIN"/>
</dbReference>
<dbReference type="GO" id="GO:0048665">
    <property type="term" value="P:neuron fate specification"/>
    <property type="evidence" value="ECO:0000316"/>
    <property type="project" value="ZFIN"/>
</dbReference>
<dbReference type="GO" id="GO:0048709">
    <property type="term" value="P:oligodendrocyte differentiation"/>
    <property type="evidence" value="ECO:0000316"/>
    <property type="project" value="ZFIN"/>
</dbReference>
<dbReference type="GO" id="GO:0043049">
    <property type="term" value="P:otic placode formation"/>
    <property type="evidence" value="ECO:0000315"/>
    <property type="project" value="ZFIN"/>
</dbReference>
<dbReference type="GO" id="GO:0071599">
    <property type="term" value="P:otic vesicle development"/>
    <property type="evidence" value="ECO:0000316"/>
    <property type="project" value="ZFIN"/>
</dbReference>
<dbReference type="GO" id="GO:0030916">
    <property type="term" value="P:otic vesicle formation"/>
    <property type="evidence" value="ECO:0000315"/>
    <property type="project" value="ZFIN"/>
</dbReference>
<dbReference type="GO" id="GO:0048840">
    <property type="term" value="P:otolith development"/>
    <property type="evidence" value="ECO:0000316"/>
    <property type="project" value="ZFIN"/>
</dbReference>
<dbReference type="GO" id="GO:0007422">
    <property type="term" value="P:peripheral nervous system development"/>
    <property type="evidence" value="ECO:0000316"/>
    <property type="project" value="ZFIN"/>
</dbReference>
<dbReference type="GO" id="GO:0051781">
    <property type="term" value="P:positive regulation of cell division"/>
    <property type="evidence" value="ECO:0007669"/>
    <property type="project" value="UniProtKB-KW"/>
</dbReference>
<dbReference type="GO" id="GO:0030335">
    <property type="term" value="P:positive regulation of cell migration"/>
    <property type="evidence" value="ECO:0000316"/>
    <property type="project" value="ZFIN"/>
</dbReference>
<dbReference type="GO" id="GO:0008284">
    <property type="term" value="P:positive regulation of cell population proliferation"/>
    <property type="evidence" value="ECO:0000318"/>
    <property type="project" value="GO_Central"/>
</dbReference>
<dbReference type="GO" id="GO:0043410">
    <property type="term" value="P:positive regulation of MAPK cascade"/>
    <property type="evidence" value="ECO:0000318"/>
    <property type="project" value="GO_Central"/>
</dbReference>
<dbReference type="GO" id="GO:0050769">
    <property type="term" value="P:positive regulation of neurogenesis"/>
    <property type="evidence" value="ECO:0000315"/>
    <property type="project" value="ZFIN"/>
</dbReference>
<dbReference type="GO" id="GO:0045666">
    <property type="term" value="P:positive regulation of neuron differentiation"/>
    <property type="evidence" value="ECO:0000315"/>
    <property type="project" value="ZFIN"/>
</dbReference>
<dbReference type="GO" id="GO:0030177">
    <property type="term" value="P:positive regulation of Wnt signaling pathway"/>
    <property type="evidence" value="ECO:0000316"/>
    <property type="project" value="ZFIN"/>
</dbReference>
<dbReference type="GO" id="GO:0048920">
    <property type="term" value="P:posterior lateral line neuromast primordium migration"/>
    <property type="evidence" value="ECO:0000316"/>
    <property type="project" value="ZFIN"/>
</dbReference>
<dbReference type="GO" id="GO:0030334">
    <property type="term" value="P:regulation of cell migration"/>
    <property type="evidence" value="ECO:0000318"/>
    <property type="project" value="GO_Central"/>
</dbReference>
<dbReference type="GO" id="GO:0060041">
    <property type="term" value="P:retina development in camera-type eye"/>
    <property type="evidence" value="ECO:0000316"/>
    <property type="project" value="ZFIN"/>
</dbReference>
<dbReference type="GO" id="GO:0021571">
    <property type="term" value="P:rhombomere 5 development"/>
    <property type="evidence" value="ECO:0000316"/>
    <property type="project" value="ZFIN"/>
</dbReference>
<dbReference type="GO" id="GO:0021572">
    <property type="term" value="P:rhombomere 6 development"/>
    <property type="evidence" value="ECO:0000316"/>
    <property type="project" value="ZFIN"/>
</dbReference>
<dbReference type="GO" id="GO:0001501">
    <property type="term" value="P:skeletal system development"/>
    <property type="evidence" value="ECO:0000315"/>
    <property type="project" value="ZFIN"/>
</dbReference>
<dbReference type="GO" id="GO:0060118">
    <property type="term" value="P:vestibular receptor cell development"/>
    <property type="evidence" value="ECO:0000315"/>
    <property type="project" value="ZFIN"/>
</dbReference>
<dbReference type="GO" id="GO:0016055">
    <property type="term" value="P:Wnt signaling pathway"/>
    <property type="evidence" value="ECO:0000315"/>
    <property type="project" value="ZFIN"/>
</dbReference>
<dbReference type="CDD" id="cd23315">
    <property type="entry name" value="beta-trefoil_FGF3"/>
    <property type="match status" value="1"/>
</dbReference>
<dbReference type="Gene3D" id="2.80.10.50">
    <property type="match status" value="1"/>
</dbReference>
<dbReference type="InterPro" id="IPR002209">
    <property type="entry name" value="Fibroblast_GF_fam"/>
</dbReference>
<dbReference type="InterPro" id="IPR008996">
    <property type="entry name" value="IL1/FGF"/>
</dbReference>
<dbReference type="PANTHER" id="PTHR11486">
    <property type="entry name" value="FIBROBLAST GROWTH FACTOR"/>
    <property type="match status" value="1"/>
</dbReference>
<dbReference type="Pfam" id="PF00167">
    <property type="entry name" value="FGF"/>
    <property type="match status" value="1"/>
</dbReference>
<dbReference type="PRINTS" id="PR00263">
    <property type="entry name" value="HBGFFGF"/>
</dbReference>
<dbReference type="PRINTS" id="PR00262">
    <property type="entry name" value="IL1HBGF"/>
</dbReference>
<dbReference type="SMART" id="SM00442">
    <property type="entry name" value="FGF"/>
    <property type="match status" value="1"/>
</dbReference>
<dbReference type="SUPFAM" id="SSF50353">
    <property type="entry name" value="Cytokine"/>
    <property type="match status" value="1"/>
</dbReference>
<dbReference type="PROSITE" id="PS00247">
    <property type="entry name" value="HBGF_FGF"/>
    <property type="match status" value="1"/>
</dbReference>
<organism>
    <name type="scientific">Danio rerio</name>
    <name type="common">Zebrafish</name>
    <name type="synonym">Brachydanio rerio</name>
    <dbReference type="NCBI Taxonomy" id="7955"/>
    <lineage>
        <taxon>Eukaryota</taxon>
        <taxon>Metazoa</taxon>
        <taxon>Chordata</taxon>
        <taxon>Craniata</taxon>
        <taxon>Vertebrata</taxon>
        <taxon>Euteleostomi</taxon>
        <taxon>Actinopterygii</taxon>
        <taxon>Neopterygii</taxon>
        <taxon>Teleostei</taxon>
        <taxon>Ostariophysi</taxon>
        <taxon>Cypriniformes</taxon>
        <taxon>Danionidae</taxon>
        <taxon>Danioninae</taxon>
        <taxon>Danio</taxon>
    </lineage>
</organism>
<reference key="1">
    <citation type="journal article" date="1996" name="Gene">
        <title>The zebrafish Fgf-3 gene: cDNA sequence, transcript structure and genomic organization.</title>
        <authorList>
            <person name="Kiefer P."/>
            <person name="Strahle U."/>
            <person name="Dickson C."/>
        </authorList>
    </citation>
    <scope>NUCLEOTIDE SEQUENCE [GENOMIC DNA]</scope>
</reference>
<reference key="2">
    <citation type="journal article" date="1996" name="Oncogene">
        <title>Secretion and mitogenic activity of zebrafish FGF3 reveal intermediate properties relative to mouse and Xenopus homologues.</title>
        <authorList>
            <person name="Kiefer P."/>
            <person name="Strahle U."/>
            <person name="Mason I."/>
            <person name="Dickson C."/>
        </authorList>
    </citation>
    <scope>CHARACTERIZATION</scope>
    <scope>SUBCELLULAR LOCATION</scope>
</reference>
<evidence type="ECO:0000250" key="1"/>
<evidence type="ECO:0000255" key="2"/>
<evidence type="ECO:0000256" key="3">
    <source>
        <dbReference type="SAM" id="MobiDB-lite"/>
    </source>
</evidence>
<evidence type="ECO:0000305" key="4"/>
<evidence type="ECO:0000305" key="5">
    <source>
    </source>
</evidence>
<keyword id="KW-0217">Developmental protein</keyword>
<keyword id="KW-0221">Differentiation</keyword>
<keyword id="KW-0339">Growth factor</keyword>
<keyword id="KW-0497">Mitogen</keyword>
<keyword id="KW-1185">Reference proteome</keyword>
<keyword id="KW-0964">Secreted</keyword>
<keyword id="KW-0732">Signal</keyword>
<protein>
    <recommendedName>
        <fullName>Fibroblast growth factor 3</fullName>
        <shortName>FGF-3</shortName>
    </recommendedName>
    <alternativeName>
        <fullName>Heparin-binding growth factor 3</fullName>
        <shortName>HBGF-3</shortName>
    </alternativeName>
</protein>
<proteinExistence type="evidence at protein level"/>